<reference key="1">
    <citation type="journal article" date="2000" name="Nature">
        <title>The complete sequence of the mucosal pathogen Ureaplasma urealyticum.</title>
        <authorList>
            <person name="Glass J.I."/>
            <person name="Lefkowitz E.J."/>
            <person name="Glass J.S."/>
            <person name="Heiner C.R."/>
            <person name="Chen E.Y."/>
            <person name="Cassell G.H."/>
        </authorList>
    </citation>
    <scope>NUCLEOTIDE SEQUENCE [LARGE SCALE GENOMIC DNA]</scope>
    <source>
        <strain>ATCC 700970</strain>
    </source>
</reference>
<keyword id="KW-0066">ATP synthesis</keyword>
<keyword id="KW-1003">Cell membrane</keyword>
<keyword id="KW-0138">CF(0)</keyword>
<keyword id="KW-0375">Hydrogen ion transport</keyword>
<keyword id="KW-0406">Ion transport</keyword>
<keyword id="KW-0449">Lipoprotein</keyword>
<keyword id="KW-0472">Membrane</keyword>
<keyword id="KW-0564">Palmitate</keyword>
<keyword id="KW-1185">Reference proteome</keyword>
<keyword id="KW-0732">Signal</keyword>
<keyword id="KW-0812">Transmembrane</keyword>
<keyword id="KW-1133">Transmembrane helix</keyword>
<keyword id="KW-0813">Transport</keyword>
<protein>
    <recommendedName>
        <fullName evidence="2">ATP synthase subunit b</fullName>
    </recommendedName>
    <alternativeName>
        <fullName evidence="2">ATP synthase F(0) sector subunit b</fullName>
    </alternativeName>
    <alternativeName>
        <fullName evidence="2">ATPase subunit I</fullName>
    </alternativeName>
    <alternativeName>
        <fullName evidence="2">F-type ATPase subunit b</fullName>
        <shortName evidence="2">F-ATPase subunit b</shortName>
    </alternativeName>
</protein>
<comment type="function">
    <text evidence="2">F(1)F(0) ATP synthase produces ATP from ADP in the presence of a proton or sodium gradient. F-type ATPases consist of two structural domains, F(1) containing the extramembraneous catalytic core and F(0) containing the membrane proton channel, linked together by a central stalk and a peripheral stalk. During catalysis, ATP synthesis in the catalytic domain of F(1) is coupled via a rotary mechanism of the central stalk subunits to proton translocation.</text>
</comment>
<comment type="function">
    <text evidence="2">Component of the F(0) channel, it forms part of the peripheral stalk, linking F(1) to F(0).</text>
</comment>
<comment type="subunit">
    <text evidence="2">F-type ATPases have 2 components, F(1) - the catalytic core - and F(0) - the membrane proton channel. F(1) has five subunits: alpha(3), beta(3), gamma(1), delta(1), epsilon(1). F(0) has three main subunits: a(1), b(2) and c(10-14). The alpha and beta chains form an alternating ring which encloses part of the gamma chain. F(1) is attached to F(0) by a central stalk formed by the gamma and epsilon chains, while a peripheral stalk is formed by the delta and b chains.</text>
</comment>
<comment type="subcellular location">
    <subcellularLocation>
        <location evidence="2">Cell membrane</location>
        <topology evidence="2">Single-pass membrane protein</topology>
    </subcellularLocation>
</comment>
<comment type="similarity">
    <text evidence="2">Belongs to the ATPase B chain family.</text>
</comment>
<accession>Q9PR09</accession>
<evidence type="ECO:0000255" key="1"/>
<evidence type="ECO:0000255" key="2">
    <source>
        <dbReference type="HAMAP-Rule" id="MF_01398"/>
    </source>
</evidence>
<sequence length="205" mass="23216">MKLNKKHLVAILSVLSLSIIVVPLLTSCTGDIPELNPAEIINTLFPNVWVFIAQVIAMCVVFSLVLWLVWKPTNKMLDKRREYIAKEITDAENAKQEALQYLENAKSEHLAAQAQTLEIIAKAKSESLTLRESLEKEAREAADKIISSAKISIANERRENLERLQSEAREAAYIAAEALMKKELSREDNDKLVDQFIKELENNEK</sequence>
<gene>
    <name evidence="2" type="primary">atpF</name>
    <name type="ordered locus">UU135</name>
</gene>
<proteinExistence type="inferred from homology"/>
<organism>
    <name type="scientific">Ureaplasma parvum serovar 3 (strain ATCC 700970)</name>
    <dbReference type="NCBI Taxonomy" id="273119"/>
    <lineage>
        <taxon>Bacteria</taxon>
        <taxon>Bacillati</taxon>
        <taxon>Mycoplasmatota</taxon>
        <taxon>Mycoplasmoidales</taxon>
        <taxon>Mycoplasmoidaceae</taxon>
        <taxon>Ureaplasma</taxon>
    </lineage>
</organism>
<dbReference type="EMBL" id="AF222894">
    <property type="protein sequence ID" value="AAF30541.1"/>
    <property type="molecule type" value="Genomic_DNA"/>
</dbReference>
<dbReference type="RefSeq" id="WP_006688915.1">
    <property type="nucleotide sequence ID" value="NC_002162.1"/>
</dbReference>
<dbReference type="SMR" id="Q9PR09"/>
<dbReference type="STRING" id="273119.UU135"/>
<dbReference type="EnsemblBacteria" id="AAF30541">
    <property type="protein sequence ID" value="AAF30541"/>
    <property type="gene ID" value="UU135"/>
</dbReference>
<dbReference type="GeneID" id="60419922"/>
<dbReference type="KEGG" id="uur:UU135"/>
<dbReference type="eggNOG" id="COG0711">
    <property type="taxonomic scope" value="Bacteria"/>
</dbReference>
<dbReference type="HOGENOM" id="CLU_079215_4_3_14"/>
<dbReference type="Proteomes" id="UP000000423">
    <property type="component" value="Chromosome"/>
</dbReference>
<dbReference type="GO" id="GO:0005886">
    <property type="term" value="C:plasma membrane"/>
    <property type="evidence" value="ECO:0007669"/>
    <property type="project" value="UniProtKB-SubCell"/>
</dbReference>
<dbReference type="GO" id="GO:0045259">
    <property type="term" value="C:proton-transporting ATP synthase complex"/>
    <property type="evidence" value="ECO:0007669"/>
    <property type="project" value="UniProtKB-KW"/>
</dbReference>
<dbReference type="GO" id="GO:0046933">
    <property type="term" value="F:proton-transporting ATP synthase activity, rotational mechanism"/>
    <property type="evidence" value="ECO:0007669"/>
    <property type="project" value="UniProtKB-UniRule"/>
</dbReference>
<dbReference type="GO" id="GO:0046961">
    <property type="term" value="F:proton-transporting ATPase activity, rotational mechanism"/>
    <property type="evidence" value="ECO:0007669"/>
    <property type="project" value="TreeGrafter"/>
</dbReference>
<dbReference type="CDD" id="cd06503">
    <property type="entry name" value="ATP-synt_Fo_b"/>
    <property type="match status" value="1"/>
</dbReference>
<dbReference type="HAMAP" id="MF_01398">
    <property type="entry name" value="ATP_synth_b_bprime"/>
    <property type="match status" value="1"/>
</dbReference>
<dbReference type="InterPro" id="IPR002146">
    <property type="entry name" value="ATP_synth_b/b'su_bac/chlpt"/>
</dbReference>
<dbReference type="InterPro" id="IPR005864">
    <property type="entry name" value="ATP_synth_F0_bsu_bac"/>
</dbReference>
<dbReference type="InterPro" id="IPR050059">
    <property type="entry name" value="ATP_synthase_B_chain"/>
</dbReference>
<dbReference type="NCBIfam" id="TIGR01144">
    <property type="entry name" value="ATP_synt_b"/>
    <property type="match status" value="1"/>
</dbReference>
<dbReference type="NCBIfam" id="NF004874">
    <property type="entry name" value="PRK06231.2-1"/>
    <property type="match status" value="1"/>
</dbReference>
<dbReference type="PANTHER" id="PTHR33445:SF1">
    <property type="entry name" value="ATP SYNTHASE SUBUNIT B"/>
    <property type="match status" value="1"/>
</dbReference>
<dbReference type="PANTHER" id="PTHR33445">
    <property type="entry name" value="ATP SYNTHASE SUBUNIT B', CHLOROPLASTIC"/>
    <property type="match status" value="1"/>
</dbReference>
<dbReference type="Pfam" id="PF00430">
    <property type="entry name" value="ATP-synt_B"/>
    <property type="match status" value="1"/>
</dbReference>
<dbReference type="PROSITE" id="PS51257">
    <property type="entry name" value="PROKAR_LIPOPROTEIN"/>
    <property type="match status" value="1"/>
</dbReference>
<name>ATPF_UREPA</name>
<feature type="signal peptide" evidence="1">
    <location>
        <begin position="1"/>
        <end position="27"/>
    </location>
</feature>
<feature type="chain" id="PRO_0000368852" description="ATP synthase subunit b">
    <location>
        <begin position="28"/>
        <end position="205"/>
    </location>
</feature>
<feature type="transmembrane region" description="Helical" evidence="2">
    <location>
        <begin position="48"/>
        <end position="68"/>
    </location>
</feature>
<feature type="lipid moiety-binding region" description="N-palmitoyl cysteine" evidence="1">
    <location>
        <position position="28"/>
    </location>
</feature>
<feature type="lipid moiety-binding region" description="S-diacylglycerol cysteine" evidence="1">
    <location>
        <position position="28"/>
    </location>
</feature>